<proteinExistence type="inferred from homology"/>
<feature type="initiator methionine" description="Removed" evidence="1">
    <location>
        <position position="1"/>
    </location>
</feature>
<feature type="chain" id="PRO_0000112987" description="Ornithine carbamoyltransferase, catabolic">
    <location>
        <begin position="2"/>
        <end position="336"/>
    </location>
</feature>
<feature type="binding site" evidence="2">
    <location>
        <begin position="57"/>
        <end position="60"/>
    </location>
    <ligand>
        <name>carbamoyl phosphate</name>
        <dbReference type="ChEBI" id="CHEBI:58228"/>
    </ligand>
</feature>
<feature type="binding site" evidence="2">
    <location>
        <position position="84"/>
    </location>
    <ligand>
        <name>carbamoyl phosphate</name>
        <dbReference type="ChEBI" id="CHEBI:58228"/>
    </ligand>
</feature>
<feature type="binding site" evidence="2">
    <location>
        <position position="108"/>
    </location>
    <ligand>
        <name>carbamoyl phosphate</name>
        <dbReference type="ChEBI" id="CHEBI:58228"/>
    </ligand>
</feature>
<feature type="binding site" evidence="2">
    <location>
        <begin position="135"/>
        <end position="138"/>
    </location>
    <ligand>
        <name>carbamoyl phosphate</name>
        <dbReference type="ChEBI" id="CHEBI:58228"/>
    </ligand>
</feature>
<feature type="binding site" evidence="2">
    <location>
        <position position="168"/>
    </location>
    <ligand>
        <name>L-ornithine</name>
        <dbReference type="ChEBI" id="CHEBI:46911"/>
    </ligand>
</feature>
<feature type="binding site" evidence="2">
    <location>
        <position position="232"/>
    </location>
    <ligand>
        <name>L-ornithine</name>
        <dbReference type="ChEBI" id="CHEBI:46911"/>
    </ligand>
</feature>
<feature type="binding site" evidence="2">
    <location>
        <begin position="236"/>
        <end position="237"/>
    </location>
    <ligand>
        <name>L-ornithine</name>
        <dbReference type="ChEBI" id="CHEBI:46911"/>
    </ligand>
</feature>
<feature type="binding site" evidence="2">
    <location>
        <begin position="274"/>
        <end position="275"/>
    </location>
    <ligand>
        <name>carbamoyl phosphate</name>
        <dbReference type="ChEBI" id="CHEBI:58228"/>
    </ligand>
</feature>
<feature type="binding site" evidence="2">
    <location>
        <position position="321"/>
    </location>
    <ligand>
        <name>carbamoyl phosphate</name>
        <dbReference type="ChEBI" id="CHEBI:58228"/>
    </ligand>
</feature>
<accession>Q936V7</accession>
<name>OTCC_ECTME</name>
<reference key="1">
    <citation type="submission" date="2001-10" db="EMBL/GenBank/DDBJ databases">
        <title>Ornithine transcarbamoylase from Pseudomonas.</title>
        <authorList>
            <person name="Durbecq V."/>
            <person name="Stalon V."/>
        </authorList>
    </citation>
    <scope>NUCLEOTIDE SEQUENCE [GENOMIC DNA]</scope>
</reference>
<sequence>MAFNMHNRNLLSLMHHSPRDVRYLLDLSRDLKRAKYTGTEQQHLKRKNIALIFEKTSTRTRCAFEVAAYDQGANVTYIDPNSSQIGHKESMKDTARVLGRMYDAIEYRGFKQEIVEELATYAGVPVFNGLTAEYHPTQMLADVLTMREHTDKPLHDITYAYLGDARNNMGNSLLLIGAKLGMDVRIAAPKALWPHDDHVAACKKFAEESGARITLTEDPKEAVKGVDFVHTDVWVSMGEPVEAWGERIKELLPYQVNVEIMKAAGNPRVKFMHCLPAFHNSETKVGKQIAEQYPNLKNGIEVTEDVFESPWNIAFEQAENRMHTIKAILVSTLADI</sequence>
<comment type="function">
    <text evidence="1">Reversibly catalyzes the transfer of the carbamoyl group from carbamoyl phosphate (CP) to the N(epsilon) atom of ornithine (ORN) to produce L-citrulline.</text>
</comment>
<comment type="catalytic activity">
    <reaction>
        <text>carbamoyl phosphate + L-ornithine = L-citrulline + phosphate + H(+)</text>
        <dbReference type="Rhea" id="RHEA:19513"/>
        <dbReference type="ChEBI" id="CHEBI:15378"/>
        <dbReference type="ChEBI" id="CHEBI:43474"/>
        <dbReference type="ChEBI" id="CHEBI:46911"/>
        <dbReference type="ChEBI" id="CHEBI:57743"/>
        <dbReference type="ChEBI" id="CHEBI:58228"/>
        <dbReference type="EC" id="2.1.3.3"/>
    </reaction>
</comment>
<comment type="pathway">
    <text>Amino-acid degradation; L-arginine degradation via ADI pathway; carbamoyl phosphate from L-arginine: step 2/2.</text>
</comment>
<comment type="subcellular location">
    <subcellularLocation>
        <location evidence="1">Cytoplasm</location>
    </subcellularLocation>
</comment>
<comment type="similarity">
    <text evidence="3">Belongs to the aspartate/ornithine carbamoyltransferase superfamily. OTCase family.</text>
</comment>
<dbReference type="EC" id="2.1.3.3"/>
<dbReference type="EMBL" id="AJ417700">
    <property type="protein sequence ID" value="CAD10424.1"/>
    <property type="molecule type" value="Genomic_DNA"/>
</dbReference>
<dbReference type="SMR" id="Q936V7"/>
<dbReference type="STRING" id="1001585.MDS_1159"/>
<dbReference type="UniPathway" id="UPA00254">
    <property type="reaction ID" value="UER00365"/>
</dbReference>
<dbReference type="GO" id="GO:0005737">
    <property type="term" value="C:cytoplasm"/>
    <property type="evidence" value="ECO:0007669"/>
    <property type="project" value="UniProtKB-SubCell"/>
</dbReference>
<dbReference type="GO" id="GO:0016597">
    <property type="term" value="F:amino acid binding"/>
    <property type="evidence" value="ECO:0007669"/>
    <property type="project" value="InterPro"/>
</dbReference>
<dbReference type="GO" id="GO:0004585">
    <property type="term" value="F:ornithine carbamoyltransferase activity"/>
    <property type="evidence" value="ECO:0007669"/>
    <property type="project" value="UniProtKB-UniRule"/>
</dbReference>
<dbReference type="GO" id="GO:0042450">
    <property type="term" value="P:arginine biosynthetic process via ornithine"/>
    <property type="evidence" value="ECO:0007669"/>
    <property type="project" value="TreeGrafter"/>
</dbReference>
<dbReference type="GO" id="GO:0019547">
    <property type="term" value="P:arginine catabolic process to ornithine"/>
    <property type="evidence" value="ECO:0007669"/>
    <property type="project" value="UniProtKB-UniPathway"/>
</dbReference>
<dbReference type="GO" id="GO:0019240">
    <property type="term" value="P:citrulline biosynthetic process"/>
    <property type="evidence" value="ECO:0007669"/>
    <property type="project" value="TreeGrafter"/>
</dbReference>
<dbReference type="FunFam" id="3.40.50.1370:FF:000004">
    <property type="entry name" value="Ornithine carbamoyltransferase"/>
    <property type="match status" value="1"/>
</dbReference>
<dbReference type="Gene3D" id="3.40.50.1370">
    <property type="entry name" value="Aspartate/ornithine carbamoyltransferase"/>
    <property type="match status" value="2"/>
</dbReference>
<dbReference type="HAMAP" id="MF_01109">
    <property type="entry name" value="OTCase"/>
    <property type="match status" value="1"/>
</dbReference>
<dbReference type="InterPro" id="IPR006132">
    <property type="entry name" value="Asp/Orn_carbamoyltranf_P-bd"/>
</dbReference>
<dbReference type="InterPro" id="IPR006130">
    <property type="entry name" value="Asp/Orn_carbamoylTrfase"/>
</dbReference>
<dbReference type="InterPro" id="IPR036901">
    <property type="entry name" value="Asp/Orn_carbamoylTrfase_sf"/>
</dbReference>
<dbReference type="InterPro" id="IPR006131">
    <property type="entry name" value="Asp_carbamoyltransf_Asp/Orn-bd"/>
</dbReference>
<dbReference type="InterPro" id="IPR002292">
    <property type="entry name" value="Orn/put_carbamltrans"/>
</dbReference>
<dbReference type="InterPro" id="IPR024904">
    <property type="entry name" value="OTCase_ArgI"/>
</dbReference>
<dbReference type="NCBIfam" id="TIGR00658">
    <property type="entry name" value="orni_carb_tr"/>
    <property type="match status" value="1"/>
</dbReference>
<dbReference type="NCBIfam" id="NF002470">
    <property type="entry name" value="PRK01713.1"/>
    <property type="match status" value="1"/>
</dbReference>
<dbReference type="PANTHER" id="PTHR45753:SF2">
    <property type="entry name" value="ORNITHINE CARBAMOYLTRANSFERASE"/>
    <property type="match status" value="1"/>
</dbReference>
<dbReference type="PANTHER" id="PTHR45753">
    <property type="entry name" value="ORNITHINE CARBAMOYLTRANSFERASE, MITOCHONDRIAL"/>
    <property type="match status" value="1"/>
</dbReference>
<dbReference type="Pfam" id="PF00185">
    <property type="entry name" value="OTCace"/>
    <property type="match status" value="1"/>
</dbReference>
<dbReference type="Pfam" id="PF02729">
    <property type="entry name" value="OTCace_N"/>
    <property type="match status" value="1"/>
</dbReference>
<dbReference type="PRINTS" id="PR00100">
    <property type="entry name" value="AOTCASE"/>
</dbReference>
<dbReference type="PRINTS" id="PR00102">
    <property type="entry name" value="OTCASE"/>
</dbReference>
<dbReference type="SUPFAM" id="SSF53671">
    <property type="entry name" value="Aspartate/ornithine carbamoyltransferase"/>
    <property type="match status" value="1"/>
</dbReference>
<dbReference type="PROSITE" id="PS00097">
    <property type="entry name" value="CARBAMOYLTRANSFERASE"/>
    <property type="match status" value="1"/>
</dbReference>
<protein>
    <recommendedName>
        <fullName>Ornithine carbamoyltransferase, catabolic</fullName>
        <shortName>OTCase</shortName>
        <ecNumber>2.1.3.3</ecNumber>
    </recommendedName>
</protein>
<organism>
    <name type="scientific">Ectopseudomonas mendocina</name>
    <name type="common">Pseudomonas mendocina</name>
    <dbReference type="NCBI Taxonomy" id="300"/>
    <lineage>
        <taxon>Bacteria</taxon>
        <taxon>Pseudomonadati</taxon>
        <taxon>Pseudomonadota</taxon>
        <taxon>Gammaproteobacteria</taxon>
        <taxon>Pseudomonadales</taxon>
        <taxon>Pseudomonadaceae</taxon>
        <taxon>Ectopseudomonas</taxon>
    </lineage>
</organism>
<keyword id="KW-0056">Arginine metabolism</keyword>
<keyword id="KW-0963">Cytoplasm</keyword>
<keyword id="KW-0808">Transferase</keyword>
<evidence type="ECO:0000250" key="1"/>
<evidence type="ECO:0000255" key="2">
    <source>
        <dbReference type="HAMAP-Rule" id="MF_01109"/>
    </source>
</evidence>
<evidence type="ECO:0000305" key="3"/>
<gene>
    <name type="primary">arcB</name>
</gene>